<keyword id="KW-0012">Acyltransferase</keyword>
<keyword id="KW-0963">Cytoplasm</keyword>
<keyword id="KW-0275">Fatty acid biosynthesis</keyword>
<keyword id="KW-0276">Fatty acid metabolism</keyword>
<keyword id="KW-0444">Lipid biosynthesis</keyword>
<keyword id="KW-0443">Lipid metabolism</keyword>
<keyword id="KW-0511">Multifunctional enzyme</keyword>
<keyword id="KW-0808">Transferase</keyword>
<feature type="chain" id="PRO_1000070225" description="Beta-ketoacyl-[acyl-carrier-protein] synthase III">
    <location>
        <begin position="1"/>
        <end position="329"/>
    </location>
</feature>
<feature type="region of interest" description="ACP-binding" evidence="1">
    <location>
        <begin position="257"/>
        <end position="261"/>
    </location>
</feature>
<feature type="active site" evidence="1">
    <location>
        <position position="123"/>
    </location>
</feature>
<feature type="active site" evidence="1">
    <location>
        <position position="256"/>
    </location>
</feature>
<feature type="active site" evidence="1">
    <location>
        <position position="286"/>
    </location>
</feature>
<sequence length="329" mass="35062">MAQSTLYSRVLGTGSYLPPDRVTNQQLTDRLAKEGIETSDEWIVARTGIHARHFAAPDVTTSDLALEASRRAIEAAGIDPQSIDLIIVATSTPDFVFPSTACLLQNKLGIKNGGAAFDVQAVCSGFAYAMATADSFIRSGQHRTALVIGAETFSRILDFKDRTTCVLFGDGAGAVILSASEEPGVLGSALHADGSYSHILCTPGNVNRGVIEGSAFLYMDGQAVFKLAVNVLEKVAIEALAKANLAPEQIDWLIPHQANIRIMTSTCRKLGLPQERMVVTVDQHGNTSAASIPLAFDTAVRDGRIQRGQHVLIEGVGGGFTWGASVFRY</sequence>
<dbReference type="EC" id="2.3.1.180" evidence="1"/>
<dbReference type="EMBL" id="CP000151">
    <property type="protein sequence ID" value="ABB07830.1"/>
    <property type="molecule type" value="Genomic_DNA"/>
</dbReference>
<dbReference type="RefSeq" id="WP_011351403.1">
    <property type="nucleotide sequence ID" value="NZ_WNDV01000026.1"/>
</dbReference>
<dbReference type="SMR" id="Q39I86"/>
<dbReference type="GeneID" id="45094134"/>
<dbReference type="KEGG" id="bur:Bcep18194_A4233"/>
<dbReference type="PATRIC" id="fig|482957.22.peg.1125"/>
<dbReference type="HOGENOM" id="CLU_039592_3_1_4"/>
<dbReference type="UniPathway" id="UPA00094"/>
<dbReference type="Proteomes" id="UP000002705">
    <property type="component" value="Chromosome 1"/>
</dbReference>
<dbReference type="GO" id="GO:0005737">
    <property type="term" value="C:cytoplasm"/>
    <property type="evidence" value="ECO:0007669"/>
    <property type="project" value="UniProtKB-SubCell"/>
</dbReference>
<dbReference type="GO" id="GO:0004315">
    <property type="term" value="F:3-oxoacyl-[acyl-carrier-protein] synthase activity"/>
    <property type="evidence" value="ECO:0007669"/>
    <property type="project" value="InterPro"/>
</dbReference>
<dbReference type="GO" id="GO:0033818">
    <property type="term" value="F:beta-ketoacyl-acyl-carrier-protein synthase III activity"/>
    <property type="evidence" value="ECO:0007669"/>
    <property type="project" value="UniProtKB-UniRule"/>
</dbReference>
<dbReference type="GO" id="GO:0006633">
    <property type="term" value="P:fatty acid biosynthetic process"/>
    <property type="evidence" value="ECO:0007669"/>
    <property type="project" value="UniProtKB-UniRule"/>
</dbReference>
<dbReference type="GO" id="GO:0044550">
    <property type="term" value="P:secondary metabolite biosynthetic process"/>
    <property type="evidence" value="ECO:0007669"/>
    <property type="project" value="TreeGrafter"/>
</dbReference>
<dbReference type="CDD" id="cd00830">
    <property type="entry name" value="KAS_III"/>
    <property type="match status" value="1"/>
</dbReference>
<dbReference type="FunFam" id="3.40.47.10:FF:000004">
    <property type="entry name" value="3-oxoacyl-[acyl-carrier-protein] synthase 3"/>
    <property type="match status" value="1"/>
</dbReference>
<dbReference type="Gene3D" id="3.40.47.10">
    <property type="match status" value="2"/>
</dbReference>
<dbReference type="HAMAP" id="MF_01815">
    <property type="entry name" value="FabH"/>
    <property type="match status" value="1"/>
</dbReference>
<dbReference type="InterPro" id="IPR013747">
    <property type="entry name" value="ACP_syn_III_C"/>
</dbReference>
<dbReference type="InterPro" id="IPR013751">
    <property type="entry name" value="ACP_syn_III_N"/>
</dbReference>
<dbReference type="InterPro" id="IPR004655">
    <property type="entry name" value="FabH"/>
</dbReference>
<dbReference type="InterPro" id="IPR016039">
    <property type="entry name" value="Thiolase-like"/>
</dbReference>
<dbReference type="NCBIfam" id="TIGR00747">
    <property type="entry name" value="fabH"/>
    <property type="match status" value="1"/>
</dbReference>
<dbReference type="NCBIfam" id="NF006829">
    <property type="entry name" value="PRK09352.1"/>
    <property type="match status" value="1"/>
</dbReference>
<dbReference type="PANTHER" id="PTHR34069">
    <property type="entry name" value="3-OXOACYL-[ACYL-CARRIER-PROTEIN] SYNTHASE 3"/>
    <property type="match status" value="1"/>
</dbReference>
<dbReference type="PANTHER" id="PTHR34069:SF2">
    <property type="entry name" value="BETA-KETOACYL-[ACYL-CARRIER-PROTEIN] SYNTHASE III"/>
    <property type="match status" value="1"/>
</dbReference>
<dbReference type="Pfam" id="PF08545">
    <property type="entry name" value="ACP_syn_III"/>
    <property type="match status" value="1"/>
</dbReference>
<dbReference type="Pfam" id="PF08541">
    <property type="entry name" value="ACP_syn_III_C"/>
    <property type="match status" value="1"/>
</dbReference>
<dbReference type="SUPFAM" id="SSF53901">
    <property type="entry name" value="Thiolase-like"/>
    <property type="match status" value="1"/>
</dbReference>
<organism>
    <name type="scientific">Burkholderia lata (strain ATCC 17760 / DSM 23089 / LMG 22485 / NCIMB 9086 / R18194 / 383)</name>
    <dbReference type="NCBI Taxonomy" id="482957"/>
    <lineage>
        <taxon>Bacteria</taxon>
        <taxon>Pseudomonadati</taxon>
        <taxon>Pseudomonadota</taxon>
        <taxon>Betaproteobacteria</taxon>
        <taxon>Burkholderiales</taxon>
        <taxon>Burkholderiaceae</taxon>
        <taxon>Burkholderia</taxon>
        <taxon>Burkholderia cepacia complex</taxon>
    </lineage>
</organism>
<protein>
    <recommendedName>
        <fullName evidence="1">Beta-ketoacyl-[acyl-carrier-protein] synthase III</fullName>
        <shortName evidence="1">Beta-ketoacyl-ACP synthase III</shortName>
        <shortName evidence="1">KAS III</shortName>
        <ecNumber evidence="1">2.3.1.180</ecNumber>
    </recommendedName>
    <alternativeName>
        <fullName evidence="1">3-oxoacyl-[acyl-carrier-protein] synthase 3</fullName>
    </alternativeName>
    <alternativeName>
        <fullName evidence="1">3-oxoacyl-[acyl-carrier-protein] synthase III</fullName>
    </alternativeName>
</protein>
<comment type="function">
    <text evidence="1">Catalyzes the condensation reaction of fatty acid synthesis by the addition to an acyl acceptor of two carbons from malonyl-ACP. Catalyzes the first condensation reaction which initiates fatty acid synthesis and may therefore play a role in governing the total rate of fatty acid production. Possesses both acetoacetyl-ACP synthase and acetyl transacylase activities. Its substrate specificity determines the biosynthesis of branched-chain and/or straight-chain of fatty acids.</text>
</comment>
<comment type="catalytic activity">
    <reaction evidence="1">
        <text>malonyl-[ACP] + acetyl-CoA + H(+) = 3-oxobutanoyl-[ACP] + CO2 + CoA</text>
        <dbReference type="Rhea" id="RHEA:12080"/>
        <dbReference type="Rhea" id="RHEA-COMP:9623"/>
        <dbReference type="Rhea" id="RHEA-COMP:9625"/>
        <dbReference type="ChEBI" id="CHEBI:15378"/>
        <dbReference type="ChEBI" id="CHEBI:16526"/>
        <dbReference type="ChEBI" id="CHEBI:57287"/>
        <dbReference type="ChEBI" id="CHEBI:57288"/>
        <dbReference type="ChEBI" id="CHEBI:78449"/>
        <dbReference type="ChEBI" id="CHEBI:78450"/>
        <dbReference type="EC" id="2.3.1.180"/>
    </reaction>
</comment>
<comment type="pathway">
    <text evidence="1">Lipid metabolism; fatty acid biosynthesis.</text>
</comment>
<comment type="subunit">
    <text evidence="1">Homodimer.</text>
</comment>
<comment type="subcellular location">
    <subcellularLocation>
        <location evidence="1">Cytoplasm</location>
    </subcellularLocation>
</comment>
<comment type="domain">
    <text evidence="1">The last Arg residue of the ACP-binding site is essential for the weak association between ACP/AcpP and FabH.</text>
</comment>
<comment type="similarity">
    <text evidence="1">Belongs to the thiolase-like superfamily. FabH family.</text>
</comment>
<name>FABH_BURL3</name>
<proteinExistence type="inferred from homology"/>
<reference key="1">
    <citation type="submission" date="2005-10" db="EMBL/GenBank/DDBJ databases">
        <title>Complete sequence of chromosome 1 of Burkholderia sp. 383.</title>
        <authorList>
            <consortium name="US DOE Joint Genome Institute"/>
            <person name="Copeland A."/>
            <person name="Lucas S."/>
            <person name="Lapidus A."/>
            <person name="Barry K."/>
            <person name="Detter J.C."/>
            <person name="Glavina T."/>
            <person name="Hammon N."/>
            <person name="Israni S."/>
            <person name="Pitluck S."/>
            <person name="Chain P."/>
            <person name="Malfatti S."/>
            <person name="Shin M."/>
            <person name="Vergez L."/>
            <person name="Schmutz J."/>
            <person name="Larimer F."/>
            <person name="Land M."/>
            <person name="Kyrpides N."/>
            <person name="Lykidis A."/>
            <person name="Richardson P."/>
        </authorList>
    </citation>
    <scope>NUCLEOTIDE SEQUENCE [LARGE SCALE GENOMIC DNA]</scope>
    <source>
        <strain>ATCC 17760 / DSM 23089 / LMG 22485 / NCIMB 9086 / R18194 / 383</strain>
    </source>
</reference>
<evidence type="ECO:0000255" key="1">
    <source>
        <dbReference type="HAMAP-Rule" id="MF_01815"/>
    </source>
</evidence>
<gene>
    <name evidence="1" type="primary">fabH</name>
    <name type="ordered locus">Bcep18194_A4233</name>
</gene>
<accession>Q39I86</accession>